<protein>
    <recommendedName>
        <fullName evidence="1">Imidazolonepropionase</fullName>
        <ecNumber evidence="1">3.5.2.7</ecNumber>
    </recommendedName>
    <alternativeName>
        <fullName evidence="1">Imidazolone-5-propionate hydrolase</fullName>
    </alternativeName>
</protein>
<evidence type="ECO:0000255" key="1">
    <source>
        <dbReference type="HAMAP-Rule" id="MF_00372"/>
    </source>
</evidence>
<comment type="function">
    <text evidence="1">Catalyzes the hydrolytic cleavage of the carbon-nitrogen bond in imidazolone-5-propanoate to yield N-formimidoyl-L-glutamate. It is the third step in the universal histidine degradation pathway.</text>
</comment>
<comment type="catalytic activity">
    <reaction evidence="1">
        <text>4-imidazolone-5-propanoate + H2O = N-formimidoyl-L-glutamate</text>
        <dbReference type="Rhea" id="RHEA:23660"/>
        <dbReference type="ChEBI" id="CHEBI:15377"/>
        <dbReference type="ChEBI" id="CHEBI:58928"/>
        <dbReference type="ChEBI" id="CHEBI:77893"/>
        <dbReference type="EC" id="3.5.2.7"/>
    </reaction>
</comment>
<comment type="cofactor">
    <cofactor evidence="1">
        <name>Zn(2+)</name>
        <dbReference type="ChEBI" id="CHEBI:29105"/>
    </cofactor>
    <cofactor evidence="1">
        <name>Fe(3+)</name>
        <dbReference type="ChEBI" id="CHEBI:29034"/>
    </cofactor>
    <text evidence="1">Binds 1 zinc or iron ion per subunit.</text>
</comment>
<comment type="pathway">
    <text evidence="1">Amino-acid degradation; L-histidine degradation into L-glutamate; N-formimidoyl-L-glutamate from L-histidine: step 3/3.</text>
</comment>
<comment type="subcellular location">
    <subcellularLocation>
        <location evidence="1">Cytoplasm</location>
    </subcellularLocation>
</comment>
<comment type="similarity">
    <text evidence="1">Belongs to the metallo-dependent hydrolases superfamily. HutI family.</text>
</comment>
<accession>Q5X739</accession>
<name>HUTI_LEGPA</name>
<organism>
    <name type="scientific">Legionella pneumophila (strain Paris)</name>
    <dbReference type="NCBI Taxonomy" id="297246"/>
    <lineage>
        <taxon>Bacteria</taxon>
        <taxon>Pseudomonadati</taxon>
        <taxon>Pseudomonadota</taxon>
        <taxon>Gammaproteobacteria</taxon>
        <taxon>Legionellales</taxon>
        <taxon>Legionellaceae</taxon>
        <taxon>Legionella</taxon>
    </lineage>
</organism>
<keyword id="KW-0963">Cytoplasm</keyword>
<keyword id="KW-0369">Histidine metabolism</keyword>
<keyword id="KW-0378">Hydrolase</keyword>
<keyword id="KW-0408">Iron</keyword>
<keyword id="KW-0479">Metal-binding</keyword>
<keyword id="KW-0862">Zinc</keyword>
<gene>
    <name evidence="1" type="primary">hutI</name>
    <name type="ordered locus">lpp0766</name>
</gene>
<proteinExistence type="inferred from homology"/>
<reference key="1">
    <citation type="journal article" date="2004" name="Nat. Genet.">
        <title>Evidence in the Legionella pneumophila genome for exploitation of host cell functions and high genome plasticity.</title>
        <authorList>
            <person name="Cazalet C."/>
            <person name="Rusniok C."/>
            <person name="Brueggemann H."/>
            <person name="Zidane N."/>
            <person name="Magnier A."/>
            <person name="Ma L."/>
            <person name="Tichit M."/>
            <person name="Jarraud S."/>
            <person name="Bouchier C."/>
            <person name="Vandenesch F."/>
            <person name="Kunst F."/>
            <person name="Etienne J."/>
            <person name="Glaser P."/>
            <person name="Buchrieser C."/>
        </authorList>
    </citation>
    <scope>NUCLEOTIDE SEQUENCE [LARGE SCALE GENOMIC DNA]</scope>
    <source>
        <strain>Paris</strain>
    </source>
</reference>
<dbReference type="EC" id="3.5.2.7" evidence="1"/>
<dbReference type="EMBL" id="CR628336">
    <property type="protein sequence ID" value="CAH11914.1"/>
    <property type="molecule type" value="Genomic_DNA"/>
</dbReference>
<dbReference type="RefSeq" id="WP_011213291.1">
    <property type="nucleotide sequence ID" value="NC_006368.1"/>
</dbReference>
<dbReference type="SMR" id="Q5X739"/>
<dbReference type="KEGG" id="lpp:lpp0766"/>
<dbReference type="LegioList" id="lpp0766"/>
<dbReference type="HOGENOM" id="CLU_041647_0_0_6"/>
<dbReference type="UniPathway" id="UPA00379">
    <property type="reaction ID" value="UER00551"/>
</dbReference>
<dbReference type="GO" id="GO:0005737">
    <property type="term" value="C:cytoplasm"/>
    <property type="evidence" value="ECO:0007669"/>
    <property type="project" value="UniProtKB-SubCell"/>
</dbReference>
<dbReference type="GO" id="GO:0050480">
    <property type="term" value="F:imidazolonepropionase activity"/>
    <property type="evidence" value="ECO:0007669"/>
    <property type="project" value="UniProtKB-UniRule"/>
</dbReference>
<dbReference type="GO" id="GO:0005506">
    <property type="term" value="F:iron ion binding"/>
    <property type="evidence" value="ECO:0007669"/>
    <property type="project" value="UniProtKB-UniRule"/>
</dbReference>
<dbReference type="GO" id="GO:0008270">
    <property type="term" value="F:zinc ion binding"/>
    <property type="evidence" value="ECO:0007669"/>
    <property type="project" value="UniProtKB-UniRule"/>
</dbReference>
<dbReference type="GO" id="GO:0019556">
    <property type="term" value="P:L-histidine catabolic process to glutamate and formamide"/>
    <property type="evidence" value="ECO:0007669"/>
    <property type="project" value="UniProtKB-UniPathway"/>
</dbReference>
<dbReference type="GO" id="GO:0019557">
    <property type="term" value="P:L-histidine catabolic process to glutamate and formate"/>
    <property type="evidence" value="ECO:0007669"/>
    <property type="project" value="UniProtKB-UniPathway"/>
</dbReference>
<dbReference type="CDD" id="cd01296">
    <property type="entry name" value="Imidazolone-5PH"/>
    <property type="match status" value="1"/>
</dbReference>
<dbReference type="FunFam" id="3.20.20.140:FF:000007">
    <property type="entry name" value="Imidazolonepropionase"/>
    <property type="match status" value="1"/>
</dbReference>
<dbReference type="Gene3D" id="3.20.20.140">
    <property type="entry name" value="Metal-dependent hydrolases"/>
    <property type="match status" value="1"/>
</dbReference>
<dbReference type="Gene3D" id="2.30.40.10">
    <property type="entry name" value="Urease, subunit C, domain 1"/>
    <property type="match status" value="1"/>
</dbReference>
<dbReference type="HAMAP" id="MF_00372">
    <property type="entry name" value="HutI"/>
    <property type="match status" value="1"/>
</dbReference>
<dbReference type="InterPro" id="IPR006680">
    <property type="entry name" value="Amidohydro-rel"/>
</dbReference>
<dbReference type="InterPro" id="IPR005920">
    <property type="entry name" value="HutI"/>
</dbReference>
<dbReference type="InterPro" id="IPR011059">
    <property type="entry name" value="Metal-dep_hydrolase_composite"/>
</dbReference>
<dbReference type="InterPro" id="IPR032466">
    <property type="entry name" value="Metal_Hydrolase"/>
</dbReference>
<dbReference type="NCBIfam" id="TIGR01224">
    <property type="entry name" value="hutI"/>
    <property type="match status" value="1"/>
</dbReference>
<dbReference type="PANTHER" id="PTHR42752">
    <property type="entry name" value="IMIDAZOLONEPROPIONASE"/>
    <property type="match status" value="1"/>
</dbReference>
<dbReference type="PANTHER" id="PTHR42752:SF1">
    <property type="entry name" value="IMIDAZOLONEPROPIONASE-RELATED"/>
    <property type="match status" value="1"/>
</dbReference>
<dbReference type="Pfam" id="PF01979">
    <property type="entry name" value="Amidohydro_1"/>
    <property type="match status" value="1"/>
</dbReference>
<dbReference type="SUPFAM" id="SSF51338">
    <property type="entry name" value="Composite domain of metallo-dependent hydrolases"/>
    <property type="match status" value="1"/>
</dbReference>
<dbReference type="SUPFAM" id="SSF51556">
    <property type="entry name" value="Metallo-dependent hydrolases"/>
    <property type="match status" value="1"/>
</dbReference>
<sequence length="403" mass="43703">MFACDELLLNASTIDATGLQLSNQAIVIRKGRIEWCGSEDQLPAHFQESAKSRKDCHGQLITPGLIDCHTHLVYAGHRAAEFRLKLQGVSYADIAKSGGGILSTVQMTRDASEEELVDQSLPRLLALKNEGVTTVEIKSGYGLDLQNELKMLRVARQLGEVAGIRVKTTFLGAHAVGPEFKGNSQAYVDFLCNEMLPAAKNMDLVDAVDVFCESIAFSIRQAEQIFQAAKDLNLPIKCHAEQLSNMGASSLAARYGALSCDHLEFLDENGALNMVKANTVAVLLPGAFYFLKEKQKPPVDLLRQVGVGMAIATDSNPGSSPTTSLLLMMSMACQFFSMSIPEVLSAVTYQASRALGMEKDIGSIEAGKIADLVLWSIKDSAALCYYFAYPLPHQTMVAGEWVS</sequence>
<feature type="chain" id="PRO_0000306470" description="Imidazolonepropionase">
    <location>
        <begin position="1"/>
        <end position="403"/>
    </location>
</feature>
<feature type="binding site" evidence="1">
    <location>
        <position position="69"/>
    </location>
    <ligand>
        <name>Fe(3+)</name>
        <dbReference type="ChEBI" id="CHEBI:29034"/>
    </ligand>
</feature>
<feature type="binding site" evidence="1">
    <location>
        <position position="69"/>
    </location>
    <ligand>
        <name>Zn(2+)</name>
        <dbReference type="ChEBI" id="CHEBI:29105"/>
    </ligand>
</feature>
<feature type="binding site" evidence="1">
    <location>
        <position position="71"/>
    </location>
    <ligand>
        <name>Fe(3+)</name>
        <dbReference type="ChEBI" id="CHEBI:29034"/>
    </ligand>
</feature>
<feature type="binding site" evidence="1">
    <location>
        <position position="71"/>
    </location>
    <ligand>
        <name>Zn(2+)</name>
        <dbReference type="ChEBI" id="CHEBI:29105"/>
    </ligand>
</feature>
<feature type="binding site" evidence="1">
    <location>
        <position position="78"/>
    </location>
    <ligand>
        <name>4-imidazolone-5-propanoate</name>
        <dbReference type="ChEBI" id="CHEBI:77893"/>
    </ligand>
</feature>
<feature type="binding site" evidence="1">
    <location>
        <position position="141"/>
    </location>
    <ligand>
        <name>4-imidazolone-5-propanoate</name>
        <dbReference type="ChEBI" id="CHEBI:77893"/>
    </ligand>
</feature>
<feature type="binding site" evidence="1">
    <location>
        <position position="141"/>
    </location>
    <ligand>
        <name>N-formimidoyl-L-glutamate</name>
        <dbReference type="ChEBI" id="CHEBI:58928"/>
    </ligand>
</feature>
<feature type="binding site" evidence="1">
    <location>
        <position position="174"/>
    </location>
    <ligand>
        <name>4-imidazolone-5-propanoate</name>
        <dbReference type="ChEBI" id="CHEBI:77893"/>
    </ligand>
</feature>
<feature type="binding site" evidence="1">
    <location>
        <position position="239"/>
    </location>
    <ligand>
        <name>Fe(3+)</name>
        <dbReference type="ChEBI" id="CHEBI:29034"/>
    </ligand>
</feature>
<feature type="binding site" evidence="1">
    <location>
        <position position="239"/>
    </location>
    <ligand>
        <name>Zn(2+)</name>
        <dbReference type="ChEBI" id="CHEBI:29105"/>
    </ligand>
</feature>
<feature type="binding site" evidence="1">
    <location>
        <position position="242"/>
    </location>
    <ligand>
        <name>4-imidazolone-5-propanoate</name>
        <dbReference type="ChEBI" id="CHEBI:77893"/>
    </ligand>
</feature>
<feature type="binding site" evidence="1">
    <location>
        <position position="314"/>
    </location>
    <ligand>
        <name>Fe(3+)</name>
        <dbReference type="ChEBI" id="CHEBI:29034"/>
    </ligand>
</feature>
<feature type="binding site" evidence="1">
    <location>
        <position position="314"/>
    </location>
    <ligand>
        <name>Zn(2+)</name>
        <dbReference type="ChEBI" id="CHEBI:29105"/>
    </ligand>
</feature>
<feature type="binding site" evidence="1">
    <location>
        <position position="316"/>
    </location>
    <ligand>
        <name>N-formimidoyl-L-glutamate</name>
        <dbReference type="ChEBI" id="CHEBI:58928"/>
    </ligand>
</feature>
<feature type="binding site" evidence="1">
    <location>
        <position position="318"/>
    </location>
    <ligand>
        <name>N-formimidoyl-L-glutamate</name>
        <dbReference type="ChEBI" id="CHEBI:58928"/>
    </ligand>
</feature>
<feature type="binding site" evidence="1">
    <location>
        <position position="319"/>
    </location>
    <ligand>
        <name>4-imidazolone-5-propanoate</name>
        <dbReference type="ChEBI" id="CHEBI:77893"/>
    </ligand>
</feature>